<comment type="function">
    <text evidence="3">Involved in the degradation of galactose via the DeLey-Doudoroff pathway. Catalyzes the oxidation of galactose in the presence of NAD(+). Uses NAD(+) as a hydrogen acceptor more efficiently than NADP(+).</text>
</comment>
<comment type="disruption phenotype">
    <text evidence="3">Cells lacking this gene fail to grow on galactose as sole carbon source.</text>
</comment>
<comment type="similarity">
    <text evidence="4">Belongs to the short-chain dehydrogenases/reductases (SDR) family.</text>
</comment>
<protein>
    <recommendedName>
        <fullName>Probable galactose dehydrogenase GalD</fullName>
        <ecNumber>1.1.1.-</ecNumber>
    </recommendedName>
</protein>
<name>GALD_RHIME</name>
<reference key="1">
    <citation type="journal article" date="2001" name="Proc. Natl. Acad. Sci. U.S.A.">
        <title>Analysis of the chromosome sequence of the legume symbiont Sinorhizobium meliloti strain 1021.</title>
        <authorList>
            <person name="Capela D."/>
            <person name="Barloy-Hubler F."/>
            <person name="Gouzy J."/>
            <person name="Bothe G."/>
            <person name="Ampe F."/>
            <person name="Batut J."/>
            <person name="Boistard P."/>
            <person name="Becker A."/>
            <person name="Boutry M."/>
            <person name="Cadieu E."/>
            <person name="Dreano S."/>
            <person name="Gloux S."/>
            <person name="Godrie T."/>
            <person name="Goffeau A."/>
            <person name="Kahn D."/>
            <person name="Kiss E."/>
            <person name="Lelaure V."/>
            <person name="Masuy D."/>
            <person name="Pohl T."/>
            <person name="Portetelle D."/>
            <person name="Puehler A."/>
            <person name="Purnelle B."/>
            <person name="Ramsperger U."/>
            <person name="Renard C."/>
            <person name="Thebault P."/>
            <person name="Vandenbol M."/>
            <person name="Weidner S."/>
            <person name="Galibert F."/>
        </authorList>
    </citation>
    <scope>NUCLEOTIDE SEQUENCE [LARGE SCALE GENOMIC DNA]</scope>
    <source>
        <strain>1021</strain>
    </source>
</reference>
<reference key="2">
    <citation type="journal article" date="2001" name="Science">
        <title>The composite genome of the legume symbiont Sinorhizobium meliloti.</title>
        <authorList>
            <person name="Galibert F."/>
            <person name="Finan T.M."/>
            <person name="Long S.R."/>
            <person name="Puehler A."/>
            <person name="Abola P."/>
            <person name="Ampe F."/>
            <person name="Barloy-Hubler F."/>
            <person name="Barnett M.J."/>
            <person name="Becker A."/>
            <person name="Boistard P."/>
            <person name="Bothe G."/>
            <person name="Boutry M."/>
            <person name="Bowser L."/>
            <person name="Buhrmester J."/>
            <person name="Cadieu E."/>
            <person name="Capela D."/>
            <person name="Chain P."/>
            <person name="Cowie A."/>
            <person name="Davis R.W."/>
            <person name="Dreano S."/>
            <person name="Federspiel N.A."/>
            <person name="Fisher R.F."/>
            <person name="Gloux S."/>
            <person name="Godrie T."/>
            <person name="Goffeau A."/>
            <person name="Golding B."/>
            <person name="Gouzy J."/>
            <person name="Gurjal M."/>
            <person name="Hernandez-Lucas I."/>
            <person name="Hong A."/>
            <person name="Huizar L."/>
            <person name="Hyman R.W."/>
            <person name="Jones T."/>
            <person name="Kahn D."/>
            <person name="Kahn M.L."/>
            <person name="Kalman S."/>
            <person name="Keating D.H."/>
            <person name="Kiss E."/>
            <person name="Komp C."/>
            <person name="Lelaure V."/>
            <person name="Masuy D."/>
            <person name="Palm C."/>
            <person name="Peck M.C."/>
            <person name="Pohl T.M."/>
            <person name="Portetelle D."/>
            <person name="Purnelle B."/>
            <person name="Ramsperger U."/>
            <person name="Surzycki R."/>
            <person name="Thebault P."/>
            <person name="Vandenbol M."/>
            <person name="Vorhoelter F.J."/>
            <person name="Weidner S."/>
            <person name="Wells D.H."/>
            <person name="Wong K."/>
            <person name="Yeh K.-C."/>
            <person name="Batut J."/>
        </authorList>
    </citation>
    <scope>NUCLEOTIDE SEQUENCE [LARGE SCALE GENOMIC DNA]</scope>
    <source>
        <strain>1021</strain>
    </source>
</reference>
<reference key="3">
    <citation type="journal article" date="2012" name="J. Bacteriol.">
        <title>Inability to catabolize galactose leads to increased ability to compete for nodule occupancy in Sinorhizobium meliloti.</title>
        <authorList>
            <person name="Geddes B.A."/>
            <person name="Oresnik I.J."/>
        </authorList>
    </citation>
    <scope>FUNCTION</scope>
    <scope>DISRUPTION PHENOTYPE</scope>
    <source>
        <strain>1021</strain>
    </source>
</reference>
<keyword id="KW-0520">NAD</keyword>
<keyword id="KW-0560">Oxidoreductase</keyword>
<keyword id="KW-1185">Reference proteome</keyword>
<sequence length="256" mass="27294">MTLPSSQFPDLRDRGVLVTGGGSGIGAALVEAFARQGARVAFVDIAAESSLALCEKVAAQTGQAPHFIQADLRNVEAVRAAADEAVAKLGSVRVLVNNAARDDRQALEAVTEESWDESLSVNLRHLFFMCQAVAPHMQRQGGGSIVNFSSIAFLLNMPEIPAYSTAKAGIIGLTKSLAGKLGPDNIRVNAILPGMIVTERQRRLWLTEESIARMQERQCLKRMLVADDLVGPCLFLASDSSAAMTAQAMIIDGGVF</sequence>
<organism>
    <name type="scientific">Rhizobium meliloti (strain 1021)</name>
    <name type="common">Ensifer meliloti</name>
    <name type="synonym">Sinorhizobium meliloti</name>
    <dbReference type="NCBI Taxonomy" id="266834"/>
    <lineage>
        <taxon>Bacteria</taxon>
        <taxon>Pseudomonadati</taxon>
        <taxon>Pseudomonadota</taxon>
        <taxon>Alphaproteobacteria</taxon>
        <taxon>Hyphomicrobiales</taxon>
        <taxon>Rhizobiaceae</taxon>
        <taxon>Sinorhizobium/Ensifer group</taxon>
        <taxon>Sinorhizobium</taxon>
    </lineage>
</organism>
<evidence type="ECO:0000250" key="1"/>
<evidence type="ECO:0000255" key="2">
    <source>
        <dbReference type="PROSITE-ProRule" id="PRU10001"/>
    </source>
</evidence>
<evidence type="ECO:0000269" key="3">
    <source>
    </source>
</evidence>
<evidence type="ECO:0000305" key="4"/>
<feature type="chain" id="PRO_0000428929" description="Probable galactose dehydrogenase GalD">
    <location>
        <begin position="1"/>
        <end position="256"/>
    </location>
</feature>
<feature type="active site" description="Proton acceptor" evidence="2">
    <location>
        <position position="163"/>
    </location>
</feature>
<feature type="binding site" evidence="1">
    <location>
        <begin position="20"/>
        <end position="23"/>
    </location>
    <ligand>
        <name>NAD(+)</name>
        <dbReference type="ChEBI" id="CHEBI:57540"/>
    </ligand>
</feature>
<feature type="binding site" evidence="1">
    <location>
        <begin position="71"/>
        <end position="72"/>
    </location>
    <ligand>
        <name>NAD(+)</name>
        <dbReference type="ChEBI" id="CHEBI:57540"/>
    </ligand>
</feature>
<feature type="binding site" evidence="1">
    <location>
        <position position="98"/>
    </location>
    <ligand>
        <name>NAD(+)</name>
        <dbReference type="ChEBI" id="CHEBI:57540"/>
    </ligand>
</feature>
<feature type="binding site" evidence="1">
    <location>
        <position position="150"/>
    </location>
    <ligand>
        <name>substrate</name>
    </ligand>
</feature>
<feature type="binding site" evidence="1">
    <location>
        <begin position="163"/>
        <end position="167"/>
    </location>
    <ligand>
        <name>NAD(+)</name>
        <dbReference type="ChEBI" id="CHEBI:57540"/>
    </ligand>
</feature>
<feature type="binding site" evidence="1">
    <location>
        <position position="196"/>
    </location>
    <ligand>
        <name>NAD(+)</name>
        <dbReference type="ChEBI" id="CHEBI:57540"/>
    </ligand>
</feature>
<gene>
    <name type="primary">galD</name>
    <name type="synonym">fabG2</name>
    <name type="ordered locus">R00826</name>
    <name type="ORF">SMc00880</name>
</gene>
<accession>Q92RN6</accession>
<dbReference type="EC" id="1.1.1.-"/>
<dbReference type="EMBL" id="AL591688">
    <property type="protein sequence ID" value="CAC45398.1"/>
    <property type="molecule type" value="Genomic_DNA"/>
</dbReference>
<dbReference type="RefSeq" id="NP_384932.1">
    <property type="nucleotide sequence ID" value="NC_003047.1"/>
</dbReference>
<dbReference type="RefSeq" id="WP_010968851.1">
    <property type="nucleotide sequence ID" value="NC_003047.1"/>
</dbReference>
<dbReference type="SMR" id="Q92RN6"/>
<dbReference type="EnsemblBacteria" id="CAC45398">
    <property type="protein sequence ID" value="CAC45398"/>
    <property type="gene ID" value="SMc00880"/>
</dbReference>
<dbReference type="KEGG" id="sme:SMc00880"/>
<dbReference type="PATRIC" id="fig|266834.11.peg.2216"/>
<dbReference type="eggNOG" id="COG1028">
    <property type="taxonomic scope" value="Bacteria"/>
</dbReference>
<dbReference type="HOGENOM" id="CLU_010194_1_0_5"/>
<dbReference type="OrthoDB" id="9789398at2"/>
<dbReference type="Proteomes" id="UP000001976">
    <property type="component" value="Chromosome"/>
</dbReference>
<dbReference type="GO" id="GO:0016491">
    <property type="term" value="F:oxidoreductase activity"/>
    <property type="evidence" value="ECO:0007669"/>
    <property type="project" value="UniProtKB-KW"/>
</dbReference>
<dbReference type="CDD" id="cd05233">
    <property type="entry name" value="SDR_c"/>
    <property type="match status" value="1"/>
</dbReference>
<dbReference type="FunFam" id="3.40.50.720:FF:000084">
    <property type="entry name" value="Short-chain dehydrogenase reductase"/>
    <property type="match status" value="1"/>
</dbReference>
<dbReference type="Gene3D" id="3.40.50.720">
    <property type="entry name" value="NAD(P)-binding Rossmann-like Domain"/>
    <property type="match status" value="1"/>
</dbReference>
<dbReference type="InterPro" id="IPR036291">
    <property type="entry name" value="NAD(P)-bd_dom_sf"/>
</dbReference>
<dbReference type="InterPro" id="IPR020904">
    <property type="entry name" value="Sc_DH/Rdtase_CS"/>
</dbReference>
<dbReference type="InterPro" id="IPR002347">
    <property type="entry name" value="SDR_fam"/>
</dbReference>
<dbReference type="PANTHER" id="PTHR43639">
    <property type="entry name" value="OXIDOREDUCTASE, SHORT-CHAIN DEHYDROGENASE/REDUCTASE FAMILY (AFU_ORTHOLOGUE AFUA_5G02870)"/>
    <property type="match status" value="1"/>
</dbReference>
<dbReference type="PANTHER" id="PTHR43639:SF1">
    <property type="entry name" value="SHORT-CHAIN DEHYDROGENASE_REDUCTASE FAMILY PROTEIN"/>
    <property type="match status" value="1"/>
</dbReference>
<dbReference type="Pfam" id="PF13561">
    <property type="entry name" value="adh_short_C2"/>
    <property type="match status" value="1"/>
</dbReference>
<dbReference type="PRINTS" id="PR00081">
    <property type="entry name" value="GDHRDH"/>
</dbReference>
<dbReference type="PRINTS" id="PR00080">
    <property type="entry name" value="SDRFAMILY"/>
</dbReference>
<dbReference type="SMART" id="SM00822">
    <property type="entry name" value="PKS_KR"/>
    <property type="match status" value="1"/>
</dbReference>
<dbReference type="SUPFAM" id="SSF51735">
    <property type="entry name" value="NAD(P)-binding Rossmann-fold domains"/>
    <property type="match status" value="1"/>
</dbReference>
<dbReference type="PROSITE" id="PS00061">
    <property type="entry name" value="ADH_SHORT"/>
    <property type="match status" value="1"/>
</dbReference>
<proteinExistence type="inferred from homology"/>